<comment type="function">
    <text evidence="1">Exhibits GTPase activity. Binds RNA but is probably not involved in ribosome assembly in mycobacteria.</text>
</comment>
<comment type="subunit">
    <text evidence="1">Monomer.</text>
</comment>
<comment type="subcellular location">
    <subcellularLocation>
        <location evidence="1">Cell envelope</location>
    </subcellularLocation>
    <subcellularLocation>
        <location evidence="1">Secreted</location>
        <location evidence="1">Cell wall</location>
    </subcellularLocation>
</comment>
<comment type="similarity">
    <text evidence="1">Belongs to the TRAFAC class TrmE-Era-EngA-EngB-Septin-like GTPase superfamily. Era GTPase family.</text>
</comment>
<reference key="1">
    <citation type="submission" date="2006-10" db="EMBL/GenBank/DDBJ databases">
        <authorList>
            <person name="Fleischmann R.D."/>
            <person name="Dodson R.J."/>
            <person name="Haft D.H."/>
            <person name="Merkel J.S."/>
            <person name="Nelson W.C."/>
            <person name="Fraser C.M."/>
        </authorList>
    </citation>
    <scope>NUCLEOTIDE SEQUENCE [LARGE SCALE GENOMIC DNA]</scope>
    <source>
        <strain>104</strain>
    </source>
</reference>
<proteinExistence type="inferred from homology"/>
<gene>
    <name evidence="1" type="primary">era</name>
    <name type="ordered locus">MAV_2029</name>
</gene>
<keyword id="KW-0134">Cell wall</keyword>
<keyword id="KW-0342">GTP-binding</keyword>
<keyword id="KW-0547">Nucleotide-binding</keyword>
<keyword id="KW-0694">RNA-binding</keyword>
<keyword id="KW-0964">Secreted</keyword>
<name>ERA_MYCA1</name>
<accession>A0QEB0</accession>
<dbReference type="EMBL" id="CP000479">
    <property type="protein sequence ID" value="ABK69309.1"/>
    <property type="molecule type" value="Genomic_DNA"/>
</dbReference>
<dbReference type="RefSeq" id="WP_011724546.1">
    <property type="nucleotide sequence ID" value="NC_008595.1"/>
</dbReference>
<dbReference type="SMR" id="A0QEB0"/>
<dbReference type="KEGG" id="mav:MAV_2029"/>
<dbReference type="HOGENOM" id="CLU_038009_0_2_11"/>
<dbReference type="Proteomes" id="UP000001574">
    <property type="component" value="Chromosome"/>
</dbReference>
<dbReference type="GO" id="GO:0030313">
    <property type="term" value="C:cell envelope"/>
    <property type="evidence" value="ECO:0007669"/>
    <property type="project" value="UniProtKB-SubCell"/>
</dbReference>
<dbReference type="GO" id="GO:0005829">
    <property type="term" value="C:cytosol"/>
    <property type="evidence" value="ECO:0007669"/>
    <property type="project" value="TreeGrafter"/>
</dbReference>
<dbReference type="GO" id="GO:0005576">
    <property type="term" value="C:extracellular region"/>
    <property type="evidence" value="ECO:0007669"/>
    <property type="project" value="UniProtKB-KW"/>
</dbReference>
<dbReference type="GO" id="GO:0005525">
    <property type="term" value="F:GTP binding"/>
    <property type="evidence" value="ECO:0007669"/>
    <property type="project" value="UniProtKB-UniRule"/>
</dbReference>
<dbReference type="GO" id="GO:0003924">
    <property type="term" value="F:GTPase activity"/>
    <property type="evidence" value="ECO:0007669"/>
    <property type="project" value="UniProtKB-UniRule"/>
</dbReference>
<dbReference type="GO" id="GO:0043024">
    <property type="term" value="F:ribosomal small subunit binding"/>
    <property type="evidence" value="ECO:0007669"/>
    <property type="project" value="TreeGrafter"/>
</dbReference>
<dbReference type="GO" id="GO:0019843">
    <property type="term" value="F:rRNA binding"/>
    <property type="evidence" value="ECO:0007669"/>
    <property type="project" value="TreeGrafter"/>
</dbReference>
<dbReference type="GO" id="GO:0000028">
    <property type="term" value="P:ribosomal small subunit assembly"/>
    <property type="evidence" value="ECO:0007669"/>
    <property type="project" value="TreeGrafter"/>
</dbReference>
<dbReference type="CDD" id="cd04163">
    <property type="entry name" value="Era"/>
    <property type="match status" value="1"/>
</dbReference>
<dbReference type="CDD" id="cd22534">
    <property type="entry name" value="KH-II_Era"/>
    <property type="match status" value="1"/>
</dbReference>
<dbReference type="FunFam" id="3.30.300.20:FF:000003">
    <property type="entry name" value="GTPase Era"/>
    <property type="match status" value="1"/>
</dbReference>
<dbReference type="FunFam" id="3.40.50.300:FF:000094">
    <property type="entry name" value="GTPase Era"/>
    <property type="match status" value="1"/>
</dbReference>
<dbReference type="Gene3D" id="3.30.300.20">
    <property type="match status" value="1"/>
</dbReference>
<dbReference type="Gene3D" id="3.40.50.300">
    <property type="entry name" value="P-loop containing nucleotide triphosphate hydrolases"/>
    <property type="match status" value="1"/>
</dbReference>
<dbReference type="HAMAP" id="MF_00367">
    <property type="entry name" value="GTPase_Era"/>
    <property type="match status" value="1"/>
</dbReference>
<dbReference type="InterPro" id="IPR030388">
    <property type="entry name" value="G_ERA_dom"/>
</dbReference>
<dbReference type="InterPro" id="IPR006073">
    <property type="entry name" value="GTP-bd"/>
</dbReference>
<dbReference type="InterPro" id="IPR005662">
    <property type="entry name" value="GTPase_Era-like"/>
</dbReference>
<dbReference type="InterPro" id="IPR015946">
    <property type="entry name" value="KH_dom-like_a/b"/>
</dbReference>
<dbReference type="InterPro" id="IPR004044">
    <property type="entry name" value="KH_dom_type_2"/>
</dbReference>
<dbReference type="InterPro" id="IPR009019">
    <property type="entry name" value="KH_sf_prok-type"/>
</dbReference>
<dbReference type="InterPro" id="IPR027417">
    <property type="entry name" value="P-loop_NTPase"/>
</dbReference>
<dbReference type="InterPro" id="IPR005225">
    <property type="entry name" value="Small_GTP-bd"/>
</dbReference>
<dbReference type="NCBIfam" id="TIGR00436">
    <property type="entry name" value="era"/>
    <property type="match status" value="1"/>
</dbReference>
<dbReference type="NCBIfam" id="NF000908">
    <property type="entry name" value="PRK00089.1"/>
    <property type="match status" value="1"/>
</dbReference>
<dbReference type="NCBIfam" id="TIGR00231">
    <property type="entry name" value="small_GTP"/>
    <property type="match status" value="1"/>
</dbReference>
<dbReference type="PANTHER" id="PTHR42698">
    <property type="entry name" value="GTPASE ERA"/>
    <property type="match status" value="1"/>
</dbReference>
<dbReference type="PANTHER" id="PTHR42698:SF1">
    <property type="entry name" value="GTPASE ERA, MITOCHONDRIAL"/>
    <property type="match status" value="1"/>
</dbReference>
<dbReference type="Pfam" id="PF07650">
    <property type="entry name" value="KH_2"/>
    <property type="match status" value="1"/>
</dbReference>
<dbReference type="Pfam" id="PF01926">
    <property type="entry name" value="MMR_HSR1"/>
    <property type="match status" value="1"/>
</dbReference>
<dbReference type="PRINTS" id="PR00326">
    <property type="entry name" value="GTP1OBG"/>
</dbReference>
<dbReference type="SUPFAM" id="SSF52540">
    <property type="entry name" value="P-loop containing nucleoside triphosphate hydrolases"/>
    <property type="match status" value="1"/>
</dbReference>
<dbReference type="SUPFAM" id="SSF54814">
    <property type="entry name" value="Prokaryotic type KH domain (KH-domain type II)"/>
    <property type="match status" value="1"/>
</dbReference>
<dbReference type="PROSITE" id="PS51713">
    <property type="entry name" value="G_ERA"/>
    <property type="match status" value="1"/>
</dbReference>
<dbReference type="PROSITE" id="PS50823">
    <property type="entry name" value="KH_TYPE_2"/>
    <property type="match status" value="1"/>
</dbReference>
<evidence type="ECO:0000255" key="1">
    <source>
        <dbReference type="HAMAP-Rule" id="MF_00367"/>
    </source>
</evidence>
<evidence type="ECO:0000255" key="2">
    <source>
        <dbReference type="PROSITE-ProRule" id="PRU01050"/>
    </source>
</evidence>
<organism>
    <name type="scientific">Mycobacterium avium (strain 104)</name>
    <dbReference type="NCBI Taxonomy" id="243243"/>
    <lineage>
        <taxon>Bacteria</taxon>
        <taxon>Bacillati</taxon>
        <taxon>Actinomycetota</taxon>
        <taxon>Actinomycetes</taxon>
        <taxon>Mycobacteriales</taxon>
        <taxon>Mycobacteriaceae</taxon>
        <taxon>Mycobacterium</taxon>
        <taxon>Mycobacterium avium complex (MAC)</taxon>
    </lineage>
</organism>
<protein>
    <recommendedName>
        <fullName evidence="1">GTPase Era</fullName>
    </recommendedName>
</protein>
<feature type="chain" id="PRO_1000079709" description="GTPase Era">
    <location>
        <begin position="1"/>
        <end position="299"/>
    </location>
</feature>
<feature type="domain" description="Era-type G" evidence="2">
    <location>
        <begin position="5"/>
        <end position="175"/>
    </location>
</feature>
<feature type="domain" description="KH type-2" evidence="1">
    <location>
        <begin position="206"/>
        <end position="285"/>
    </location>
</feature>
<feature type="region of interest" description="G1" evidence="2">
    <location>
        <begin position="13"/>
        <end position="20"/>
    </location>
</feature>
<feature type="region of interest" description="G2" evidence="2">
    <location>
        <begin position="39"/>
        <end position="43"/>
    </location>
</feature>
<feature type="region of interest" description="G3" evidence="2">
    <location>
        <begin position="60"/>
        <end position="63"/>
    </location>
</feature>
<feature type="region of interest" description="G4" evidence="2">
    <location>
        <begin position="124"/>
        <end position="127"/>
    </location>
</feature>
<feature type="region of interest" description="G5" evidence="2">
    <location>
        <begin position="154"/>
        <end position="156"/>
    </location>
</feature>
<feature type="binding site" evidence="1">
    <location>
        <begin position="13"/>
        <end position="20"/>
    </location>
    <ligand>
        <name>GTP</name>
        <dbReference type="ChEBI" id="CHEBI:37565"/>
    </ligand>
</feature>
<feature type="binding site" evidence="1">
    <location>
        <begin position="60"/>
        <end position="64"/>
    </location>
    <ligand>
        <name>GTP</name>
        <dbReference type="ChEBI" id="CHEBI:37565"/>
    </ligand>
</feature>
<feature type="binding site" evidence="1">
    <location>
        <begin position="124"/>
        <end position="127"/>
    </location>
    <ligand>
        <name>GTP</name>
        <dbReference type="ChEBI" id="CHEBI:37565"/>
    </ligand>
</feature>
<sequence length="299" mass="32534">MTEFRSGFVCLVGRPNTGKSTLTNALVGTKVAITSMRPQTTRHTIRGIVHRDDFQIILVDTPGLHRPRTLLGKRLNDLVRDTYAEVDVIGLCIPADEAIGPGDRWIVEQIRATAPKTTLVAIVTKIDKVPKDRVAAQLVAVSELVGDSAEIVPVSAVTGAQVDIVIDVLAAALPPGPAYYPDGELTDEPEEVLMAELIREAALEGVRDELPHSLAVVIDEVNPREDRDDLIDVHALLYVERDSQKGIIIGKGGARLREVGTAARAQIEKLLGTKVYLDLRVKVAKNWQSDPKQLGRLGF</sequence>